<comment type="function">
    <text evidence="1">Acyl carrier protein involved in the formation of acyl-S-ACP intermediates within the mycobactin biosynthesis process.</text>
</comment>
<comment type="pathway">
    <text>Siderophore biosynthesis; mycobactin biosynthesis.</text>
</comment>
<comment type="subcellular location">
    <subcellularLocation>
        <location evidence="1">Cytoplasm</location>
    </subcellularLocation>
</comment>
<comment type="PTM">
    <text evidence="1">4'-phosphopantetheine is transferred from CoA to a specific serine of apo-ACP, leading to the activated holo-ACP form.</text>
</comment>
<proteinExistence type="inferred from homology"/>
<accession>Q1BBA1</accession>
<gene>
    <name type="primary">mbtL</name>
    <name type="ordered locus">Mmcs_1724</name>
</gene>
<protein>
    <recommendedName>
        <fullName>Acyl carrier protein MbtL</fullName>
        <shortName>ACP</shortName>
    </recommendedName>
    <alternativeName>
        <fullName>Mycobactin synthase protein L</fullName>
    </alternativeName>
</protein>
<name>MBTL_MYCSS</name>
<keyword id="KW-0963">Cytoplasm</keyword>
<keyword id="KW-0596">Phosphopantetheine</keyword>
<keyword id="KW-0597">Phosphoprotein</keyword>
<sequence length="89" mass="9466">MQTSNSESVSAALTEILRDDMNVDIRRVTRESRLIDDVGLDSVAFAVGMVAIEDRLGVALTEEDLLSCDTVGDLEAAIQAKVPSSPSGQ</sequence>
<feature type="chain" id="PRO_0000262088" description="Acyl carrier protein MbtL">
    <location>
        <begin position="1"/>
        <end position="89"/>
    </location>
</feature>
<feature type="domain" description="Carrier" evidence="2">
    <location>
        <begin position="7"/>
        <end position="82"/>
    </location>
</feature>
<feature type="modified residue" description="O-(pantetheine 4'-phosphoryl)serine" evidence="2">
    <location>
        <position position="42"/>
    </location>
</feature>
<dbReference type="EMBL" id="CP000384">
    <property type="protein sequence ID" value="ABG07833.1"/>
    <property type="molecule type" value="Genomic_DNA"/>
</dbReference>
<dbReference type="SMR" id="Q1BBA1"/>
<dbReference type="KEGG" id="mmc:Mmcs_1724"/>
<dbReference type="HOGENOM" id="CLU_108696_3_1_11"/>
<dbReference type="BioCyc" id="MSP164756:G1G6O-1765-MONOMER"/>
<dbReference type="UniPathway" id="UPA00011"/>
<dbReference type="GO" id="GO:0005737">
    <property type="term" value="C:cytoplasm"/>
    <property type="evidence" value="ECO:0007669"/>
    <property type="project" value="UniProtKB-SubCell"/>
</dbReference>
<dbReference type="Gene3D" id="1.10.1200.10">
    <property type="entry name" value="ACP-like"/>
    <property type="match status" value="1"/>
</dbReference>
<dbReference type="InterPro" id="IPR036736">
    <property type="entry name" value="ACP-like_sf"/>
</dbReference>
<dbReference type="InterPro" id="IPR009081">
    <property type="entry name" value="PP-bd_ACP"/>
</dbReference>
<dbReference type="NCBIfam" id="NF004533">
    <property type="entry name" value="PRK05883.1"/>
    <property type="match status" value="1"/>
</dbReference>
<dbReference type="Pfam" id="PF00550">
    <property type="entry name" value="PP-binding"/>
    <property type="match status" value="1"/>
</dbReference>
<dbReference type="SUPFAM" id="SSF47336">
    <property type="entry name" value="ACP-like"/>
    <property type="match status" value="1"/>
</dbReference>
<dbReference type="PROSITE" id="PS50075">
    <property type="entry name" value="CARRIER"/>
    <property type="match status" value="1"/>
</dbReference>
<reference key="1">
    <citation type="submission" date="2006-06" db="EMBL/GenBank/DDBJ databases">
        <title>Complete sequence of chromosome of Mycobacterium sp. MCS.</title>
        <authorList>
            <consortium name="US DOE Joint Genome Institute"/>
            <person name="Copeland A."/>
            <person name="Lucas S."/>
            <person name="Lapidus A."/>
            <person name="Barry K."/>
            <person name="Detter J.C."/>
            <person name="Glavina del Rio T."/>
            <person name="Hammon N."/>
            <person name="Israni S."/>
            <person name="Dalin E."/>
            <person name="Tice H."/>
            <person name="Pitluck S."/>
            <person name="Martinez M."/>
            <person name="Schmutz J."/>
            <person name="Larimer F."/>
            <person name="Land M."/>
            <person name="Hauser L."/>
            <person name="Kyrpides N."/>
            <person name="Kim E."/>
            <person name="Miller C.D."/>
            <person name="Hughes J.E."/>
            <person name="Anderson A.J."/>
            <person name="Sims R.C."/>
            <person name="Richardson P."/>
        </authorList>
    </citation>
    <scope>NUCLEOTIDE SEQUENCE [LARGE SCALE GENOMIC DNA]</scope>
    <source>
        <strain>MCS</strain>
    </source>
</reference>
<organism>
    <name type="scientific">Mycobacterium sp. (strain MCS)</name>
    <dbReference type="NCBI Taxonomy" id="164756"/>
    <lineage>
        <taxon>Bacteria</taxon>
        <taxon>Bacillati</taxon>
        <taxon>Actinomycetota</taxon>
        <taxon>Actinomycetes</taxon>
        <taxon>Mycobacteriales</taxon>
        <taxon>Mycobacteriaceae</taxon>
        <taxon>Mycobacterium</taxon>
    </lineage>
</organism>
<evidence type="ECO:0000250" key="1"/>
<evidence type="ECO:0000255" key="2">
    <source>
        <dbReference type="PROSITE-ProRule" id="PRU00258"/>
    </source>
</evidence>